<feature type="chain" id="PRO_1000187335" description="Alkyl hydroperoxide reductase AhpD">
    <location>
        <begin position="1"/>
        <end position="177"/>
    </location>
</feature>
<feature type="active site" description="Proton donor" evidence="2">
    <location>
        <position position="133"/>
    </location>
</feature>
<feature type="active site" description="Cysteine sulfenic acid (-SOH) intermediate" evidence="2">
    <location>
        <position position="136"/>
    </location>
</feature>
<feature type="disulfide bond" evidence="1">
    <location>
        <begin position="133"/>
        <end position="136"/>
    </location>
</feature>
<feature type="disulfide bond" description="Interchain (with AhpC); in linked form" evidence="2">
    <location>
        <position position="136"/>
    </location>
</feature>
<name>AHPD_COXB2</name>
<evidence type="ECO:0000250" key="1"/>
<evidence type="ECO:0000255" key="2">
    <source>
        <dbReference type="HAMAP-Rule" id="MF_01676"/>
    </source>
</evidence>
<keyword id="KW-0049">Antioxidant</keyword>
<keyword id="KW-1015">Disulfide bond</keyword>
<keyword id="KW-0560">Oxidoreductase</keyword>
<keyword id="KW-0575">Peroxidase</keyword>
<keyword id="KW-0676">Redox-active center</keyword>
<protein>
    <recommendedName>
        <fullName evidence="2">Alkyl hydroperoxide reductase AhpD</fullName>
        <ecNumber evidence="2">1.11.1.28</ecNumber>
    </recommendedName>
    <alternativeName>
        <fullName evidence="2">Alkylhydroperoxidase AhpD</fullName>
    </alternativeName>
</protein>
<sequence length="177" mass="19564">MLQTYKDQLPDYAKDLKLNLTQVLSESPSSELSNQQITGVALAVAYATRNRQLIELIFQKAEAELDESTLQAIKAAASIMAMNNIYYRFVHLVKDSEYQRLPANLRMNIIANPGIDKKDFELYSLAVSAINGCGLCIDAHANTLIKAGFSKHSIQHVIRIAAVLNGLAQVSIIENKT</sequence>
<reference key="1">
    <citation type="journal article" date="2009" name="Infect. Immun.">
        <title>Comparative genomics reveal extensive transposon-mediated genomic plasticity and diversity among potential effector proteins within the genus Coxiella.</title>
        <authorList>
            <person name="Beare P.A."/>
            <person name="Unsworth N."/>
            <person name="Andoh M."/>
            <person name="Voth D.E."/>
            <person name="Omsland A."/>
            <person name="Gilk S.D."/>
            <person name="Williams K.P."/>
            <person name="Sobral B.W."/>
            <person name="Kupko J.J. III"/>
            <person name="Porcella S.F."/>
            <person name="Samuel J.E."/>
            <person name="Heinzen R.A."/>
        </authorList>
    </citation>
    <scope>NUCLEOTIDE SEQUENCE [LARGE SCALE GENOMIC DNA]</scope>
    <source>
        <strain>CbuG_Q212</strain>
    </source>
</reference>
<accession>B6IZ19</accession>
<gene>
    <name evidence="2" type="primary">ahpD</name>
    <name type="ordered locus">CbuG_0528</name>
</gene>
<dbReference type="EC" id="1.11.1.28" evidence="2"/>
<dbReference type="EMBL" id="CP001019">
    <property type="protein sequence ID" value="ACJ17947.1"/>
    <property type="molecule type" value="Genomic_DNA"/>
</dbReference>
<dbReference type="RefSeq" id="WP_012220673.1">
    <property type="nucleotide sequence ID" value="NC_011527.1"/>
</dbReference>
<dbReference type="SMR" id="B6IZ19"/>
<dbReference type="KEGG" id="cbg:CbuG_0528"/>
<dbReference type="HOGENOM" id="CLU_105328_0_0_6"/>
<dbReference type="GO" id="GO:0008785">
    <property type="term" value="F:alkyl hydroperoxide reductase activity"/>
    <property type="evidence" value="ECO:0007669"/>
    <property type="project" value="UniProtKB-UniRule"/>
</dbReference>
<dbReference type="GO" id="GO:0015036">
    <property type="term" value="F:disulfide oxidoreductase activity"/>
    <property type="evidence" value="ECO:0007669"/>
    <property type="project" value="TreeGrafter"/>
</dbReference>
<dbReference type="GO" id="GO:0032843">
    <property type="term" value="F:hydroperoxide reductase activity"/>
    <property type="evidence" value="ECO:0007669"/>
    <property type="project" value="InterPro"/>
</dbReference>
<dbReference type="GO" id="GO:0051920">
    <property type="term" value="F:peroxiredoxin activity"/>
    <property type="evidence" value="ECO:0007669"/>
    <property type="project" value="InterPro"/>
</dbReference>
<dbReference type="GO" id="GO:0045454">
    <property type="term" value="P:cell redox homeostasis"/>
    <property type="evidence" value="ECO:0007669"/>
    <property type="project" value="TreeGrafter"/>
</dbReference>
<dbReference type="GO" id="GO:0006979">
    <property type="term" value="P:response to oxidative stress"/>
    <property type="evidence" value="ECO:0007669"/>
    <property type="project" value="InterPro"/>
</dbReference>
<dbReference type="Gene3D" id="1.20.1290.10">
    <property type="entry name" value="AhpD-like"/>
    <property type="match status" value="1"/>
</dbReference>
<dbReference type="HAMAP" id="MF_01676">
    <property type="entry name" value="AhpD"/>
    <property type="match status" value="1"/>
</dbReference>
<dbReference type="InterPro" id="IPR004674">
    <property type="entry name" value="AhpD"/>
</dbReference>
<dbReference type="InterPro" id="IPR029032">
    <property type="entry name" value="AhpD-like"/>
</dbReference>
<dbReference type="InterPro" id="IPR004675">
    <property type="entry name" value="AhpD_core"/>
</dbReference>
<dbReference type="InterPro" id="IPR003779">
    <property type="entry name" value="CMD-like"/>
</dbReference>
<dbReference type="NCBIfam" id="TIGR00778">
    <property type="entry name" value="ahpD_dom"/>
    <property type="match status" value="1"/>
</dbReference>
<dbReference type="PANTHER" id="PTHR33930">
    <property type="entry name" value="ALKYL HYDROPEROXIDE REDUCTASE AHPD"/>
    <property type="match status" value="1"/>
</dbReference>
<dbReference type="PANTHER" id="PTHR33930:SF7">
    <property type="entry name" value="ALKYL HYDROPEROXIDE REDUCTASE AHPD"/>
    <property type="match status" value="1"/>
</dbReference>
<dbReference type="Pfam" id="PF02627">
    <property type="entry name" value="CMD"/>
    <property type="match status" value="1"/>
</dbReference>
<dbReference type="SUPFAM" id="SSF69118">
    <property type="entry name" value="AhpD-like"/>
    <property type="match status" value="1"/>
</dbReference>
<comment type="function">
    <text evidence="2">Antioxidant protein with alkyl hydroperoxidase activity. Required for the reduction of the AhpC active site cysteine residues and for the regeneration of the AhpC enzyme activity.</text>
</comment>
<comment type="catalytic activity">
    <reaction evidence="2">
        <text>N(6)-[(R)-dihydrolipoyl]-L-lysyl-[lipoyl-carrier protein] + a hydroperoxide = N(6)-[(R)-lipoyl]-L-lysyl-[lipoyl-carrier protein] + an alcohol + H2O</text>
        <dbReference type="Rhea" id="RHEA:62636"/>
        <dbReference type="Rhea" id="RHEA-COMP:10502"/>
        <dbReference type="Rhea" id="RHEA-COMP:16355"/>
        <dbReference type="ChEBI" id="CHEBI:15377"/>
        <dbReference type="ChEBI" id="CHEBI:30879"/>
        <dbReference type="ChEBI" id="CHEBI:35924"/>
        <dbReference type="ChEBI" id="CHEBI:83099"/>
        <dbReference type="ChEBI" id="CHEBI:83100"/>
        <dbReference type="EC" id="1.11.1.28"/>
    </reaction>
</comment>
<comment type="similarity">
    <text evidence="2">Belongs to the AhpD family.</text>
</comment>
<proteinExistence type="inferred from homology"/>
<organism>
    <name type="scientific">Coxiella burnetii (strain CbuG_Q212)</name>
    <name type="common">Coxiella burnetii (strain Q212)</name>
    <dbReference type="NCBI Taxonomy" id="434923"/>
    <lineage>
        <taxon>Bacteria</taxon>
        <taxon>Pseudomonadati</taxon>
        <taxon>Pseudomonadota</taxon>
        <taxon>Gammaproteobacteria</taxon>
        <taxon>Legionellales</taxon>
        <taxon>Coxiellaceae</taxon>
        <taxon>Coxiella</taxon>
    </lineage>
</organism>